<protein>
    <recommendedName>
        <fullName evidence="2">Trehalose-6-phosphate synthase</fullName>
        <shortName evidence="2">TPS</shortName>
        <ecNumber evidence="2">2.4.1.15</ecNumber>
        <ecNumber evidence="2">2.4.1.347</ecNumber>
    </recommendedName>
    <alternativeName>
        <fullName evidence="2">Alpha,alpha-trehalose-phosphate synthase [UDP-forming]</fullName>
    </alternativeName>
    <alternativeName>
        <fullName evidence="1">Osmoregulatory trehalose synthesis protein A</fullName>
        <shortName evidence="1">OtsA</shortName>
    </alternativeName>
</protein>
<gene>
    <name evidence="2" type="primary">otsA</name>
    <name type="ordered locus">MUL_4052</name>
</gene>
<proteinExistence type="inferred from homology"/>
<feature type="chain" id="PRO_0000348924" description="Trehalose-6-phosphate synthase">
    <location>
        <begin position="1"/>
        <end position="500"/>
    </location>
</feature>
<feature type="binding site" evidence="1">
    <location>
        <position position="28"/>
    </location>
    <ligand>
        <name>D-glucose 6-phosphate</name>
        <dbReference type="ChEBI" id="CHEBI:61548"/>
    </ligand>
</feature>
<feature type="binding site" evidence="1">
    <location>
        <begin position="48"/>
        <end position="49"/>
    </location>
    <ligand>
        <name>UDP-alpha-D-glucose</name>
        <dbReference type="ChEBI" id="CHEBI:58885"/>
    </ligand>
</feature>
<feature type="binding site" evidence="1">
    <location>
        <position position="104"/>
    </location>
    <ligand>
        <name>D-glucose 6-phosphate</name>
        <dbReference type="ChEBI" id="CHEBI:61548"/>
    </ligand>
</feature>
<feature type="binding site" evidence="1">
    <location>
        <position position="158"/>
    </location>
    <ligand>
        <name>D-glucose 6-phosphate</name>
        <dbReference type="ChEBI" id="CHEBI:61548"/>
    </ligand>
</feature>
<feature type="binding site" evidence="1">
    <location>
        <position position="300"/>
    </location>
    <ligand>
        <name>UDP-alpha-D-glucose</name>
        <dbReference type="ChEBI" id="CHEBI:58885"/>
    </ligand>
</feature>
<feature type="binding site" evidence="1">
    <location>
        <position position="305"/>
    </location>
    <ligand>
        <name>UDP-alpha-D-glucose</name>
        <dbReference type="ChEBI" id="CHEBI:58885"/>
    </ligand>
</feature>
<feature type="binding site" evidence="1">
    <location>
        <position position="338"/>
    </location>
    <ligand>
        <name>D-glucose 6-phosphate</name>
        <dbReference type="ChEBI" id="CHEBI:61548"/>
    </ligand>
</feature>
<feature type="binding site" evidence="1">
    <location>
        <begin position="403"/>
        <end position="407"/>
    </location>
    <ligand>
        <name>UDP-alpha-D-glucose</name>
        <dbReference type="ChEBI" id="CHEBI:58885"/>
    </ligand>
</feature>
<feature type="site" description="Involved in alpha anomer selectivity" evidence="1">
    <location>
        <position position="113"/>
    </location>
</feature>
<feature type="site" description="Involved in alpha anomer selectivity" evidence="1">
    <location>
        <position position="183"/>
    </location>
</feature>
<organism>
    <name type="scientific">Mycobacterium ulcerans (strain Agy99)</name>
    <dbReference type="NCBI Taxonomy" id="362242"/>
    <lineage>
        <taxon>Bacteria</taxon>
        <taxon>Bacillati</taxon>
        <taxon>Actinomycetota</taxon>
        <taxon>Actinomycetes</taxon>
        <taxon>Mycobacteriales</taxon>
        <taxon>Mycobacteriaceae</taxon>
        <taxon>Mycobacterium</taxon>
        <taxon>Mycobacterium ulcerans group</taxon>
    </lineage>
</organism>
<dbReference type="EC" id="2.4.1.15" evidence="2"/>
<dbReference type="EC" id="2.4.1.347" evidence="2"/>
<dbReference type="EMBL" id="CP000325">
    <property type="protein sequence ID" value="ABL06105.1"/>
    <property type="molecule type" value="Genomic_DNA"/>
</dbReference>
<dbReference type="RefSeq" id="WP_011741709.1">
    <property type="nucleotide sequence ID" value="NC_008611.1"/>
</dbReference>
<dbReference type="SMR" id="A0PUT6"/>
<dbReference type="CAZy" id="GT20">
    <property type="family name" value="Glycosyltransferase Family 20"/>
</dbReference>
<dbReference type="KEGG" id="mul:MUL_4052"/>
<dbReference type="eggNOG" id="COG0380">
    <property type="taxonomic scope" value="Bacteria"/>
</dbReference>
<dbReference type="HOGENOM" id="CLU_002351_7_1_11"/>
<dbReference type="UniPathway" id="UPA00299"/>
<dbReference type="Proteomes" id="UP000000765">
    <property type="component" value="Chromosome"/>
</dbReference>
<dbReference type="GO" id="GO:0005829">
    <property type="term" value="C:cytosol"/>
    <property type="evidence" value="ECO:0007669"/>
    <property type="project" value="TreeGrafter"/>
</dbReference>
<dbReference type="GO" id="GO:0047260">
    <property type="term" value="F:alpha,alpha-trehalose-phosphate synthase (GDP-forming) activity"/>
    <property type="evidence" value="ECO:0007669"/>
    <property type="project" value="RHEA"/>
</dbReference>
<dbReference type="GO" id="GO:0003825">
    <property type="term" value="F:alpha,alpha-trehalose-phosphate synthase (UDP-forming) activity"/>
    <property type="evidence" value="ECO:0007669"/>
    <property type="project" value="UniProtKB-EC"/>
</dbReference>
<dbReference type="GO" id="GO:0004805">
    <property type="term" value="F:trehalose-phosphatase activity"/>
    <property type="evidence" value="ECO:0007669"/>
    <property type="project" value="TreeGrafter"/>
</dbReference>
<dbReference type="GO" id="GO:0005992">
    <property type="term" value="P:trehalose biosynthetic process"/>
    <property type="evidence" value="ECO:0007669"/>
    <property type="project" value="UniProtKB-UniPathway"/>
</dbReference>
<dbReference type="CDD" id="cd03788">
    <property type="entry name" value="GT20_TPS"/>
    <property type="match status" value="1"/>
</dbReference>
<dbReference type="FunFam" id="3.40.50.2000:FF:000102">
    <property type="entry name" value="Trehalose-6-phosphate synthase"/>
    <property type="match status" value="1"/>
</dbReference>
<dbReference type="Gene3D" id="3.40.50.2000">
    <property type="entry name" value="Glycogen Phosphorylase B"/>
    <property type="match status" value="2"/>
</dbReference>
<dbReference type="InterPro" id="IPR001830">
    <property type="entry name" value="Glyco_trans_20"/>
</dbReference>
<dbReference type="PANTHER" id="PTHR10788:SF106">
    <property type="entry name" value="BCDNA.GH08860"/>
    <property type="match status" value="1"/>
</dbReference>
<dbReference type="PANTHER" id="PTHR10788">
    <property type="entry name" value="TREHALOSE-6-PHOSPHATE SYNTHASE"/>
    <property type="match status" value="1"/>
</dbReference>
<dbReference type="Pfam" id="PF00982">
    <property type="entry name" value="Glyco_transf_20"/>
    <property type="match status" value="1"/>
</dbReference>
<dbReference type="SUPFAM" id="SSF53756">
    <property type="entry name" value="UDP-Glycosyltransferase/glycogen phosphorylase"/>
    <property type="match status" value="1"/>
</dbReference>
<comment type="function">
    <text evidence="2">Probably involved in the osmoprotection via the biosynthesis of trehalose and in the production of glycogen and alpha-glucan via the TreS-Pep2 branch involved in the biosynthesis of maltose-1-phosphate (M1P). Catalyzes the transfer of glucose from UDP-glucose (UDP-Glc) to D-glucose 6-phosphate (Glc-6-P) to form trehalose-6-phosphate. Probably also able to use ADP-Glc, CDP-Glc, GDP-Glc and TDP-Glc as glucosyl donors.</text>
</comment>
<comment type="catalytic activity">
    <reaction evidence="2">
        <text>ADP-alpha-D-glucose + D-glucose 6-phosphate = alpha,alpha-trehalose 6-phosphate + ADP + H(+)</text>
        <dbReference type="Rhea" id="RHEA:53880"/>
        <dbReference type="ChEBI" id="CHEBI:15378"/>
        <dbReference type="ChEBI" id="CHEBI:57498"/>
        <dbReference type="ChEBI" id="CHEBI:58429"/>
        <dbReference type="ChEBI" id="CHEBI:61548"/>
        <dbReference type="ChEBI" id="CHEBI:456216"/>
        <dbReference type="EC" id="2.4.1.347"/>
    </reaction>
</comment>
<comment type="catalytic activity">
    <reaction evidence="2">
        <text>CDP-alpha-D-glucose + D-glucose 6-phosphate = alpha,alpha-trehalose 6-phosphate + CDP + H(+)</text>
        <dbReference type="Rhea" id="RHEA:53884"/>
        <dbReference type="ChEBI" id="CHEBI:15378"/>
        <dbReference type="ChEBI" id="CHEBI:58069"/>
        <dbReference type="ChEBI" id="CHEBI:58429"/>
        <dbReference type="ChEBI" id="CHEBI:61548"/>
        <dbReference type="ChEBI" id="CHEBI:137927"/>
    </reaction>
</comment>
<comment type="catalytic activity">
    <reaction evidence="2">
        <text>GDP-alpha-D-glucose + D-glucose 6-phosphate = alpha,alpha-trehalose 6-phosphate + GDP + H(+)</text>
        <dbReference type="Rhea" id="RHEA:14605"/>
        <dbReference type="ChEBI" id="CHEBI:15378"/>
        <dbReference type="ChEBI" id="CHEBI:58189"/>
        <dbReference type="ChEBI" id="CHEBI:58429"/>
        <dbReference type="ChEBI" id="CHEBI:61548"/>
        <dbReference type="ChEBI" id="CHEBI:62230"/>
    </reaction>
</comment>
<comment type="catalytic activity">
    <reaction evidence="2">
        <text>TDP-alpha-D-glucose + D-glucose 6-phosphate = 5-methyl-UDP + alpha,alpha-trehalose 6-phosphate + H(+)</text>
        <dbReference type="Rhea" id="RHEA:53888"/>
        <dbReference type="ChEBI" id="CHEBI:15378"/>
        <dbReference type="ChEBI" id="CHEBI:58429"/>
        <dbReference type="ChEBI" id="CHEBI:61417"/>
        <dbReference type="ChEBI" id="CHEBI:61548"/>
        <dbReference type="ChEBI" id="CHEBI:137931"/>
    </reaction>
</comment>
<comment type="catalytic activity">
    <reaction evidence="2">
        <text>D-glucose 6-phosphate + UDP-alpha-D-glucose = alpha,alpha-trehalose 6-phosphate + UDP + H(+)</text>
        <dbReference type="Rhea" id="RHEA:18889"/>
        <dbReference type="ChEBI" id="CHEBI:15378"/>
        <dbReference type="ChEBI" id="CHEBI:58223"/>
        <dbReference type="ChEBI" id="CHEBI:58429"/>
        <dbReference type="ChEBI" id="CHEBI:58885"/>
        <dbReference type="ChEBI" id="CHEBI:61548"/>
        <dbReference type="EC" id="2.4.1.15"/>
    </reaction>
</comment>
<comment type="pathway">
    <text evidence="2">Glycan biosynthesis; trehalose biosynthesis.</text>
</comment>
<comment type="subunit">
    <text evidence="2">Homotetramer.</text>
</comment>
<comment type="similarity">
    <text evidence="2">Belongs to the glycosyltransferase 20 family.</text>
</comment>
<sequence>MGPGGRQSAEPASTEVFGDSDFVVVANRLPVDQERLPDGTIAWKRSPGGLVTALEPLLRRRRGAWVGWAGVVENDVDVQDEPIVQDELQLQPVRLSADDVAQYYEGFSNATLWPLYHDVIVRPIYHREWWDRYVDVNRRFAEATARAAARGGTVWVQDYQLQLVPKMLRAMRPDLTIGFFLHIPFPPVELFMQLPWRTEIIQGLLGADLVGFHLPGGAQNFLILSRRLVGADTSRGTVGVRSRFGEVILGSRTIRVGAFPISIDSGALDQTARDRNIRRRSREIRAELGNPRKILLGVDRLDYTKGIDVRLKAFSELLAEGRVKRDDTVLVQLATPSRERVESYQTLRNDIERQVGHINGEYAEVGHPVVHYLHRPVPRNELIAFFVASDVMLVTPLRDGMNLVAKEYVACRSDLGGALVLSEFTGAAAELRHAYLVNPHDLEGVNDGIEEALNQTEEAGRRRMRSMRRQVLAHDVDRWARSFLDALADSRPNDSADAAD</sequence>
<reference key="1">
    <citation type="journal article" date="2007" name="Genome Res.">
        <title>Reductive evolution and niche adaptation inferred from the genome of Mycobacterium ulcerans, the causative agent of Buruli ulcer.</title>
        <authorList>
            <person name="Stinear T.P."/>
            <person name="Seemann T."/>
            <person name="Pidot S."/>
            <person name="Frigui W."/>
            <person name="Reysset G."/>
            <person name="Garnier T."/>
            <person name="Meurice G."/>
            <person name="Simon D."/>
            <person name="Bouchier C."/>
            <person name="Ma L."/>
            <person name="Tichit M."/>
            <person name="Porter J.L."/>
            <person name="Ryan J."/>
            <person name="Johnson P.D.R."/>
            <person name="Davies J.K."/>
            <person name="Jenkin G.A."/>
            <person name="Small P.L.C."/>
            <person name="Jones L.M."/>
            <person name="Tekaia F."/>
            <person name="Laval F."/>
            <person name="Daffe M."/>
            <person name="Parkhill J."/>
            <person name="Cole S.T."/>
        </authorList>
    </citation>
    <scope>NUCLEOTIDE SEQUENCE [LARGE SCALE GENOMIC DNA]</scope>
    <source>
        <strain>Agy99</strain>
    </source>
</reference>
<evidence type="ECO:0000250" key="1">
    <source>
        <dbReference type="UniProtKB" id="P31677"/>
    </source>
</evidence>
<evidence type="ECO:0000250" key="2">
    <source>
        <dbReference type="UniProtKB" id="P9WN11"/>
    </source>
</evidence>
<accession>A0PUT6</accession>
<name>OTSA_MYCUA</name>
<keyword id="KW-0328">Glycosyltransferase</keyword>
<keyword id="KW-0808">Transferase</keyword>